<feature type="chain" id="PRO_0000442996" description="Inositol diphosphatase DSP2">
    <location>
        <begin position="1"/>
        <end position="204"/>
    </location>
</feature>
<feature type="domain" description="Tyrosine-protein phosphatase" evidence="3">
    <location>
        <begin position="51"/>
        <end position="203"/>
    </location>
</feature>
<feature type="region of interest" description="Disordered" evidence="4">
    <location>
        <begin position="1"/>
        <end position="27"/>
    </location>
</feature>
<feature type="region of interest" description="WPD loop important for active site topology" evidence="2">
    <location>
        <begin position="107"/>
        <end position="119"/>
    </location>
</feature>
<feature type="compositionally biased region" description="Basic and acidic residues" evidence="4">
    <location>
        <begin position="13"/>
        <end position="27"/>
    </location>
</feature>
<feature type="active site" description="Phosphocysteine intermediate" evidence="3">
    <location>
        <position position="143"/>
    </location>
</feature>
<feature type="binding site" evidence="2">
    <location>
        <position position="118"/>
    </location>
    <ligand>
        <name>1D-myo-inositol hexakisphosphate</name>
        <dbReference type="ChEBI" id="CHEBI:58130"/>
    </ligand>
</feature>
<feature type="binding site" evidence="2">
    <location>
        <position position="119"/>
    </location>
    <ligand>
        <name>1D-myo-inositol hexakisphosphate</name>
        <dbReference type="ChEBI" id="CHEBI:58130"/>
    </ligand>
</feature>
<feature type="binding site" evidence="2">
    <location>
        <position position="123"/>
    </location>
    <ligand>
        <name>1D-myo-inositol hexakisphosphate</name>
        <dbReference type="ChEBI" id="CHEBI:58130"/>
    </ligand>
</feature>
<feature type="site" description="Transition state stabilizer" evidence="1">
    <location>
        <position position="149"/>
    </location>
</feature>
<keyword id="KW-0963">Cytoplasm</keyword>
<keyword id="KW-0378">Hydrolase</keyword>
<keyword id="KW-0539">Nucleus</keyword>
<keyword id="KW-0611">Plant defense</keyword>
<keyword id="KW-1185">Reference proteome</keyword>
<gene>
    <name evidence="7" type="primary">DSP2</name>
    <name evidence="8" type="ordered locus">Os02g0771400</name>
    <name evidence="7" type="ordered locus">LOC_Os02g53160</name>
</gene>
<organism>
    <name type="scientific">Oryza sativa subsp. japonica</name>
    <name type="common">Rice</name>
    <dbReference type="NCBI Taxonomy" id="39947"/>
    <lineage>
        <taxon>Eukaryota</taxon>
        <taxon>Viridiplantae</taxon>
        <taxon>Streptophyta</taxon>
        <taxon>Embryophyta</taxon>
        <taxon>Tracheophyta</taxon>
        <taxon>Spermatophyta</taxon>
        <taxon>Magnoliopsida</taxon>
        <taxon>Liliopsida</taxon>
        <taxon>Poales</taxon>
        <taxon>Poaceae</taxon>
        <taxon>BOP clade</taxon>
        <taxon>Oryzoideae</taxon>
        <taxon>Oryzeae</taxon>
        <taxon>Oryzinae</taxon>
        <taxon>Oryza</taxon>
        <taxon>Oryza sativa</taxon>
    </lineage>
</organism>
<evidence type="ECO:0000250" key="1">
    <source>
        <dbReference type="UniProtKB" id="P53965"/>
    </source>
</evidence>
<evidence type="ECO:0000250" key="2">
    <source>
        <dbReference type="UniProtKB" id="Q9ZVN4"/>
    </source>
</evidence>
<evidence type="ECO:0000255" key="3">
    <source>
        <dbReference type="PROSITE-ProRule" id="PRU00160"/>
    </source>
</evidence>
<evidence type="ECO:0000256" key="4">
    <source>
        <dbReference type="SAM" id="MobiDB-lite"/>
    </source>
</evidence>
<evidence type="ECO:0000269" key="5">
    <source>
    </source>
</evidence>
<evidence type="ECO:0000303" key="6">
    <source>
    </source>
</evidence>
<evidence type="ECO:0000305" key="7"/>
<evidence type="ECO:0000312" key="8">
    <source>
        <dbReference type="EMBL" id="BAF10171.2"/>
    </source>
</evidence>
<proteinExistence type="evidence at transcript level"/>
<name>DSP2_ORYSJ</name>
<protein>
    <recommendedName>
        <fullName evidence="7">Inositol diphosphatase DSP2</fullName>
        <ecNumber evidence="2">3.6.1.52</ecNumber>
    </recommendedName>
    <alternativeName>
        <fullName evidence="7">Inositol pyrophosphate phosphatase DSP2</fullName>
    </alternativeName>
    <alternativeName>
        <fullName evidence="6">Protein PLANT AND FUNGI ATYPICAL DUAL-SPECIFICITY PHOSPHATASE 2</fullName>
        <shortName evidence="6">OsPFA-DSP2</shortName>
    </alternativeName>
</protein>
<comment type="function">
    <text evidence="2 5">Cleaves the beta-phosphate at the 5-position of soluble inositol pyrophosphates (By similarity). Has highest activity on 5-diphosphoinositol 1,2,3,4,6-pentakisphosphate (5-InsP(7)) (By similarity). Acts as a negative regulator of defense responses against the fungal pathogen Magnaporthe oryzae (PubMed:22514699).</text>
</comment>
<comment type="catalytic activity">
    <reaction evidence="2">
        <text>5-diphospho-1D-myo-inositol 1,2,3,4,6-pentakisphosphate + H2O = 1D-myo-inositol hexakisphosphate + phosphate + H(+)</text>
        <dbReference type="Rhea" id="RHEA:22384"/>
        <dbReference type="ChEBI" id="CHEBI:15377"/>
        <dbReference type="ChEBI" id="CHEBI:15378"/>
        <dbReference type="ChEBI" id="CHEBI:43474"/>
        <dbReference type="ChEBI" id="CHEBI:58130"/>
        <dbReference type="ChEBI" id="CHEBI:58628"/>
        <dbReference type="EC" id="3.6.1.52"/>
    </reaction>
    <physiologicalReaction direction="left-to-right" evidence="2">
        <dbReference type="Rhea" id="RHEA:22385"/>
    </physiologicalReaction>
</comment>
<comment type="catalytic activity">
    <reaction evidence="2">
        <text>1,5-bis(diphospho)-1D-myo-inositol 2,3,4,6-tetrakisphosphate + H2O = 1-diphospho-1D-myo-inositol 2,3,4,5,6-pentakisphosphate + phosphate + 2 H(+)</text>
        <dbReference type="Rhea" id="RHEA:79699"/>
        <dbReference type="ChEBI" id="CHEBI:15377"/>
        <dbReference type="ChEBI" id="CHEBI:15378"/>
        <dbReference type="ChEBI" id="CHEBI:43474"/>
        <dbReference type="ChEBI" id="CHEBI:74946"/>
        <dbReference type="ChEBI" id="CHEBI:77983"/>
        <dbReference type="EC" id="3.6.1.52"/>
    </reaction>
    <physiologicalReaction direction="left-to-right" evidence="2">
        <dbReference type="Rhea" id="RHEA:79700"/>
    </physiologicalReaction>
</comment>
<comment type="catalytic activity">
    <reaction evidence="2">
        <text>3,5-bis(diphospho)-1D-myo-inositol 1,2,4,6-tetrakisphosphate + H2O = 3-diphospho-1D-myo-inositol 1,2,4,5,6-pentakisphosphate + phosphate + 2 H(+)</text>
        <dbReference type="Rhea" id="RHEA:56312"/>
        <dbReference type="ChEBI" id="CHEBI:15377"/>
        <dbReference type="ChEBI" id="CHEBI:15378"/>
        <dbReference type="ChEBI" id="CHEBI:43474"/>
        <dbReference type="ChEBI" id="CHEBI:140372"/>
        <dbReference type="ChEBI" id="CHEBI:140374"/>
        <dbReference type="EC" id="3.6.1.52"/>
    </reaction>
    <physiologicalReaction direction="left-to-right" evidence="2">
        <dbReference type="Rhea" id="RHEA:56313"/>
    </physiologicalReaction>
</comment>
<comment type="catalytic activity">
    <reaction evidence="2">
        <text>6-diphospho-1D-myo-inositol pentakisphosphate + H2O = 1D-myo-inositol hexakisphosphate + phosphate + H(+)</text>
        <dbReference type="Rhea" id="RHEA:79703"/>
        <dbReference type="ChEBI" id="CHEBI:15377"/>
        <dbReference type="ChEBI" id="CHEBI:15378"/>
        <dbReference type="ChEBI" id="CHEBI:43474"/>
        <dbReference type="ChEBI" id="CHEBI:58130"/>
        <dbReference type="ChEBI" id="CHEBI:230534"/>
        <dbReference type="EC" id="3.6.1.52"/>
    </reaction>
    <physiologicalReaction direction="left-to-right" evidence="2">
        <dbReference type="Rhea" id="RHEA:79704"/>
    </physiologicalReaction>
</comment>
<comment type="subcellular location">
    <subcellularLocation>
        <location evidence="5">Cytoplasm</location>
    </subcellularLocation>
    <subcellularLocation>
        <location evidence="5">Nucleus</location>
    </subcellularLocation>
</comment>
<comment type="tissue specificity">
    <text evidence="5">Expressed in roots and young panicles.</text>
</comment>
<comment type="miscellaneous">
    <text evidence="5">Plants overexpressing DSP2 exhibit increased sensitivity to infection by the fungal pathogen Magnaporthe oryzae.</text>
</comment>
<comment type="similarity">
    <text evidence="7">Belongs to the protein-tyrosine phosphatase family. Atypical dual-specificity phosphatase Siw14-like subfamily.</text>
</comment>
<comment type="caution">
    <text evidence="7">Was initially described as a protein tyrosine phosphatase and has phosphotyrosine phosphatase activity in vitro but is now thought to function as an inositol pyrophosphate phosphatase.</text>
</comment>
<accession>Q0DX67</accession>
<dbReference type="EC" id="3.6.1.52" evidence="2"/>
<dbReference type="EMBL" id="AP008208">
    <property type="protein sequence ID" value="BAF10171.2"/>
    <property type="molecule type" value="Genomic_DNA"/>
</dbReference>
<dbReference type="EMBL" id="AP014958">
    <property type="protein sequence ID" value="BAS81119.1"/>
    <property type="molecule type" value="Genomic_DNA"/>
</dbReference>
<dbReference type="SMR" id="Q0DX67"/>
<dbReference type="FunCoup" id="Q0DX67">
    <property type="interactions" value="2"/>
</dbReference>
<dbReference type="STRING" id="39947.Q0DX67"/>
<dbReference type="PaxDb" id="39947-Q0DX67"/>
<dbReference type="EnsemblPlants" id="Os02t0771400-00">
    <property type="protein sequence ID" value="Os02t0771400-00"/>
    <property type="gene ID" value="Os02g0771400"/>
</dbReference>
<dbReference type="Gramene" id="Os02t0771400-00">
    <property type="protein sequence ID" value="Os02t0771400-00"/>
    <property type="gene ID" value="Os02g0771400"/>
</dbReference>
<dbReference type="KEGG" id="dosa:Os02g0771400"/>
<dbReference type="eggNOG" id="KOG1572">
    <property type="taxonomic scope" value="Eukaryota"/>
</dbReference>
<dbReference type="HOGENOM" id="CLU_047845_5_2_1"/>
<dbReference type="InParanoid" id="Q0DX67"/>
<dbReference type="OMA" id="RGKECAY"/>
<dbReference type="Proteomes" id="UP000000763">
    <property type="component" value="Chromosome 2"/>
</dbReference>
<dbReference type="Proteomes" id="UP000059680">
    <property type="component" value="Chromosome 2"/>
</dbReference>
<dbReference type="GO" id="GO:0005737">
    <property type="term" value="C:cytoplasm"/>
    <property type="evidence" value="ECO:0000314"/>
    <property type="project" value="UniProtKB"/>
</dbReference>
<dbReference type="GO" id="GO:0005634">
    <property type="term" value="C:nucleus"/>
    <property type="evidence" value="ECO:0000314"/>
    <property type="project" value="UniProtKB"/>
</dbReference>
<dbReference type="GO" id="GO:0052848">
    <property type="term" value="F:inositol-3,5-bisdiphosphate-2,3,4,6-tetrakisphosphate 5-diphosphatase activity"/>
    <property type="evidence" value="ECO:0007669"/>
    <property type="project" value="RHEA"/>
</dbReference>
<dbReference type="GO" id="GO:0052845">
    <property type="term" value="F:inositol-5-diphosphate-1,2,3,4,6-pentakisphosphate diphosphatase activity"/>
    <property type="evidence" value="ECO:0000250"/>
    <property type="project" value="UniProtKB"/>
</dbReference>
<dbReference type="GO" id="GO:0016791">
    <property type="term" value="F:phosphatase activity"/>
    <property type="evidence" value="ECO:0000318"/>
    <property type="project" value="GO_Central"/>
</dbReference>
<dbReference type="GO" id="GO:0004725">
    <property type="term" value="F:protein tyrosine phosphatase activity"/>
    <property type="evidence" value="ECO:0007669"/>
    <property type="project" value="UniProtKB-EC"/>
</dbReference>
<dbReference type="GO" id="GO:0006952">
    <property type="term" value="P:defense response"/>
    <property type="evidence" value="ECO:0007669"/>
    <property type="project" value="UniProtKB-KW"/>
</dbReference>
<dbReference type="GO" id="GO:1900150">
    <property type="term" value="P:regulation of defense response to fungus"/>
    <property type="evidence" value="ECO:0000315"/>
    <property type="project" value="UniProtKB"/>
</dbReference>
<dbReference type="CDD" id="cd14528">
    <property type="entry name" value="PFA-DSP_Siw14"/>
    <property type="match status" value="1"/>
</dbReference>
<dbReference type="FunFam" id="3.90.190.10:FF:000024">
    <property type="entry name" value="probable tyrosine-protein phosphatase At1g05000"/>
    <property type="match status" value="1"/>
</dbReference>
<dbReference type="Gene3D" id="3.90.190.10">
    <property type="entry name" value="Protein tyrosine phosphatase superfamily"/>
    <property type="match status" value="1"/>
</dbReference>
<dbReference type="InterPro" id="IPR020428">
    <property type="entry name" value="PFA-DSPs"/>
</dbReference>
<dbReference type="InterPro" id="IPR029021">
    <property type="entry name" value="Prot-tyrosine_phosphatase-like"/>
</dbReference>
<dbReference type="InterPro" id="IPR004861">
    <property type="entry name" value="Siw14-like"/>
</dbReference>
<dbReference type="InterPro" id="IPR016130">
    <property type="entry name" value="Tyr_Pase_AS"/>
</dbReference>
<dbReference type="InterPro" id="IPR020422">
    <property type="entry name" value="TYR_PHOSPHATASE_DUAL_dom"/>
</dbReference>
<dbReference type="PANTHER" id="PTHR31126">
    <property type="entry name" value="TYROSINE-PROTEIN PHOSPHATASE"/>
    <property type="match status" value="1"/>
</dbReference>
<dbReference type="PANTHER" id="PTHR31126:SF39">
    <property type="entry name" value="TYROSINE-PROTEIN PHOSPHATASE DSP2-RELATED"/>
    <property type="match status" value="1"/>
</dbReference>
<dbReference type="Pfam" id="PF03162">
    <property type="entry name" value="Y_phosphatase2"/>
    <property type="match status" value="1"/>
</dbReference>
<dbReference type="PRINTS" id="PR01911">
    <property type="entry name" value="PFDSPHPHTASE"/>
</dbReference>
<dbReference type="SUPFAM" id="SSF52799">
    <property type="entry name" value="(Phosphotyrosine protein) phosphatases II"/>
    <property type="match status" value="1"/>
</dbReference>
<dbReference type="PROSITE" id="PS00383">
    <property type="entry name" value="TYR_PHOSPHATASE_1"/>
    <property type="match status" value="1"/>
</dbReference>
<dbReference type="PROSITE" id="PS50054">
    <property type="entry name" value="TYR_PHOSPHATASE_DUAL"/>
    <property type="match status" value="1"/>
</dbReference>
<sequence>MQLEISPRQRSQQQKEEEGEHQQRAGEEAVGAVFSIEPWVDAAAVLVPPLNFAEVNDGIFRSGFPAADNFAFLLSLKLRSIVYLCPEPYPEENTRFLEQNGIKLHQFGIDGSKELLVNIPEEKIREALKVILDVRNQPVLIHCKRGKHRTGCVVGCLRKLQKWCLTSVFDEYQHFAAAKARSTDQRFMELFDTSSLMHLTASQC</sequence>
<reference key="1">
    <citation type="journal article" date="2005" name="Nature">
        <title>The map-based sequence of the rice genome.</title>
        <authorList>
            <consortium name="International rice genome sequencing project (IRGSP)"/>
        </authorList>
    </citation>
    <scope>NUCLEOTIDE SEQUENCE [LARGE SCALE GENOMIC DNA]</scope>
    <source>
        <strain>cv. Nipponbare</strain>
    </source>
</reference>
<reference key="2">
    <citation type="journal article" date="2008" name="Nucleic Acids Res.">
        <title>The rice annotation project database (RAP-DB): 2008 update.</title>
        <authorList>
            <consortium name="The rice annotation project (RAP)"/>
        </authorList>
    </citation>
    <scope>GENOME REANNOTATION</scope>
    <source>
        <strain>cv. Nipponbare</strain>
    </source>
</reference>
<reference key="3">
    <citation type="journal article" date="2013" name="Rice">
        <title>Improvement of the Oryza sativa Nipponbare reference genome using next generation sequence and optical map data.</title>
        <authorList>
            <person name="Kawahara Y."/>
            <person name="de la Bastide M."/>
            <person name="Hamilton J.P."/>
            <person name="Kanamori H."/>
            <person name="McCombie W.R."/>
            <person name="Ouyang S."/>
            <person name="Schwartz D.C."/>
            <person name="Tanaka T."/>
            <person name="Wu J."/>
            <person name="Zhou S."/>
            <person name="Childs K.L."/>
            <person name="Davidson R.M."/>
            <person name="Lin H."/>
            <person name="Quesada-Ocampo L."/>
            <person name="Vaillancourt B."/>
            <person name="Sakai H."/>
            <person name="Lee S.S."/>
            <person name="Kim J."/>
            <person name="Numa H."/>
            <person name="Itoh T."/>
            <person name="Buell C.R."/>
            <person name="Matsumoto T."/>
        </authorList>
    </citation>
    <scope>GENOME REANNOTATION</scope>
    <source>
        <strain>cv. Nipponbare</strain>
    </source>
</reference>
<reference key="4">
    <citation type="journal article" date="2012" name="PLoS ONE">
        <title>Two homologous putative protein tyrosine phosphatases, OsPFA-DSP2 and AtPFA-DSP4, negatively regulate the pathogen response in transgenic plants.</title>
        <authorList>
            <person name="He H."/>
            <person name="Su J."/>
            <person name="Shu S."/>
            <person name="Zhang Y."/>
            <person name="Ao Y."/>
            <person name="Liu B."/>
            <person name="Feng D."/>
            <person name="Wang J."/>
            <person name="Wang H."/>
        </authorList>
    </citation>
    <scope>FUNCTION</scope>
    <scope>SUBCELLULAR LOCATION</scope>
    <scope>TISSUE SPECIFICITY</scope>
</reference>